<name>LDH2_LACLA</name>
<keyword id="KW-0021">Allosteric enzyme</keyword>
<keyword id="KW-0963">Cytoplasm</keyword>
<keyword id="KW-0520">NAD</keyword>
<keyword id="KW-0560">Oxidoreductase</keyword>
<keyword id="KW-0597">Phosphoprotein</keyword>
<keyword id="KW-1185">Reference proteome</keyword>
<reference key="1">
    <citation type="journal article" date="2001" name="Genome Res.">
        <title>The complete genome sequence of the lactic acid bacterium Lactococcus lactis ssp. lactis IL1403.</title>
        <authorList>
            <person name="Bolotin A."/>
            <person name="Wincker P."/>
            <person name="Mauger S."/>
            <person name="Jaillon O."/>
            <person name="Malarme K."/>
            <person name="Weissenbach J."/>
            <person name="Ehrlich S.D."/>
            <person name="Sorokin A."/>
        </authorList>
    </citation>
    <scope>NUCLEOTIDE SEQUENCE [LARGE SCALE GENOMIC DNA]</scope>
    <source>
        <strain>IL1403</strain>
    </source>
</reference>
<accession>Q9CII4</accession>
<sequence length="314" mass="34311">MKITSRKVVVIGTGFVGTSIAYSMINQGLVNELVLIDVNQDKAEGEALDLLDGVSWGQENVIVRAGDYKDCKNADIVVVTAGVNQKPGQSRLDLVNTNAKIMRSIVTQVMDSGFDGIFVIASNPVDILTYVAWETSGLDQSRIVGTGTTLDTTRFRKELATKLEIDPRSVHGYIIGEHGDSEVAVWSHTTVGGKPILEFIVKNKKIGVEDLSNLSNKVKNAAYEIIDKKQATYYGIGMSTARIVKAILNNEQAILPVSAYLRGEYGQEGVFTGVPSIVNQNGVREIIELNIDAYEKKQFEKSVSQLKEVIESIK</sequence>
<gene>
    <name evidence="1" type="primary">ldh2</name>
    <name evidence="2" type="synonym">ldhB</name>
    <name type="ordered locus">LL0376</name>
    <name type="ORF">L0018</name>
</gene>
<feature type="chain" id="PRO_0000168352" description="L-lactate dehydrogenase 2">
    <location>
        <begin position="1"/>
        <end position="314"/>
    </location>
</feature>
<feature type="active site" description="Proton acceptor" evidence="1">
    <location>
        <position position="178"/>
    </location>
</feature>
<feature type="binding site" evidence="1">
    <location>
        <position position="16"/>
    </location>
    <ligand>
        <name>NAD(+)</name>
        <dbReference type="ChEBI" id="CHEBI:57540"/>
    </ligand>
</feature>
<feature type="binding site" evidence="1">
    <location>
        <position position="37"/>
    </location>
    <ligand>
        <name>NAD(+)</name>
        <dbReference type="ChEBI" id="CHEBI:57540"/>
    </ligand>
</feature>
<feature type="binding site" evidence="1">
    <location>
        <position position="42"/>
    </location>
    <ligand>
        <name>NAD(+)</name>
        <dbReference type="ChEBI" id="CHEBI:57540"/>
    </ligand>
</feature>
<feature type="binding site" evidence="1">
    <location>
        <position position="68"/>
    </location>
    <ligand>
        <name>NAD(+)</name>
        <dbReference type="ChEBI" id="CHEBI:57540"/>
    </ligand>
</feature>
<feature type="binding site" evidence="1">
    <location>
        <begin position="82"/>
        <end position="83"/>
    </location>
    <ligand>
        <name>NAD(+)</name>
        <dbReference type="ChEBI" id="CHEBI:57540"/>
    </ligand>
</feature>
<feature type="binding site" evidence="1">
    <location>
        <position position="85"/>
    </location>
    <ligand>
        <name>substrate</name>
    </ligand>
</feature>
<feature type="binding site" evidence="1">
    <location>
        <position position="91"/>
    </location>
    <ligand>
        <name>substrate</name>
    </ligand>
</feature>
<feature type="binding site" evidence="1">
    <location>
        <position position="104"/>
    </location>
    <ligand>
        <name>NAD(+)</name>
        <dbReference type="ChEBI" id="CHEBI:57540"/>
    </ligand>
</feature>
<feature type="binding site" evidence="1">
    <location>
        <begin position="121"/>
        <end position="123"/>
    </location>
    <ligand>
        <name>NAD(+)</name>
        <dbReference type="ChEBI" id="CHEBI:57540"/>
    </ligand>
</feature>
<feature type="binding site" evidence="1">
    <location>
        <begin position="123"/>
        <end position="126"/>
    </location>
    <ligand>
        <name>substrate</name>
    </ligand>
</feature>
<feature type="binding site" evidence="1">
    <location>
        <position position="146"/>
    </location>
    <ligand>
        <name>NAD(+)</name>
        <dbReference type="ChEBI" id="CHEBI:57540"/>
    </ligand>
</feature>
<feature type="binding site" evidence="1">
    <location>
        <begin position="151"/>
        <end position="154"/>
    </location>
    <ligand>
        <name>substrate</name>
    </ligand>
</feature>
<feature type="binding site" evidence="1">
    <location>
        <position position="156"/>
    </location>
    <ligand>
        <name>beta-D-fructose 1,6-bisphosphate</name>
        <dbReference type="ChEBI" id="CHEBI:32966"/>
        <note>allosteric activator</note>
    </ligand>
</feature>
<feature type="binding site" evidence="1">
    <location>
        <position position="171"/>
    </location>
    <ligand>
        <name>beta-D-fructose 1,6-bisphosphate</name>
        <dbReference type="ChEBI" id="CHEBI:32966"/>
        <note>allosteric activator</note>
    </ligand>
</feature>
<feature type="binding site" evidence="1">
    <location>
        <position position="232"/>
    </location>
    <ligand>
        <name>substrate</name>
    </ligand>
</feature>
<feature type="modified residue" description="Phosphotyrosine" evidence="1">
    <location>
        <position position="223"/>
    </location>
</feature>
<protein>
    <recommendedName>
        <fullName evidence="1">L-lactate dehydrogenase 2</fullName>
        <shortName evidence="1">L-LDH 2</shortName>
        <ecNumber evidence="1">1.1.1.27</ecNumber>
    </recommendedName>
    <alternativeName>
        <fullName evidence="2">L-lactate dehydrogenase B</fullName>
    </alternativeName>
</protein>
<dbReference type="EC" id="1.1.1.27" evidence="1"/>
<dbReference type="EMBL" id="AE005176">
    <property type="protein sequence ID" value="AAK04474.1"/>
    <property type="molecule type" value="Genomic_DNA"/>
</dbReference>
<dbReference type="PIR" id="H86671">
    <property type="entry name" value="H86671"/>
</dbReference>
<dbReference type="RefSeq" id="NP_266532.1">
    <property type="nucleotide sequence ID" value="NC_002662.1"/>
</dbReference>
<dbReference type="RefSeq" id="WP_003131609.1">
    <property type="nucleotide sequence ID" value="NC_002662.1"/>
</dbReference>
<dbReference type="SMR" id="Q9CII4"/>
<dbReference type="PaxDb" id="272623-L0018"/>
<dbReference type="EnsemblBacteria" id="AAK04474">
    <property type="protein sequence ID" value="AAK04474"/>
    <property type="gene ID" value="L0018"/>
</dbReference>
<dbReference type="KEGG" id="lla:L0018"/>
<dbReference type="PATRIC" id="fig|272623.7.peg.410"/>
<dbReference type="eggNOG" id="COG0039">
    <property type="taxonomic scope" value="Bacteria"/>
</dbReference>
<dbReference type="HOGENOM" id="CLU_045401_1_1_9"/>
<dbReference type="OrthoDB" id="9802969at2"/>
<dbReference type="SABIO-RK" id="Q9CII4"/>
<dbReference type="UniPathway" id="UPA00554">
    <property type="reaction ID" value="UER00611"/>
</dbReference>
<dbReference type="Proteomes" id="UP000002196">
    <property type="component" value="Chromosome"/>
</dbReference>
<dbReference type="GO" id="GO:0005737">
    <property type="term" value="C:cytoplasm"/>
    <property type="evidence" value="ECO:0007669"/>
    <property type="project" value="UniProtKB-SubCell"/>
</dbReference>
<dbReference type="GO" id="GO:0004459">
    <property type="term" value="F:L-lactate dehydrogenase activity"/>
    <property type="evidence" value="ECO:0007669"/>
    <property type="project" value="UniProtKB-UniRule"/>
</dbReference>
<dbReference type="GO" id="GO:0006096">
    <property type="term" value="P:glycolytic process"/>
    <property type="evidence" value="ECO:0007669"/>
    <property type="project" value="UniProtKB-UniRule"/>
</dbReference>
<dbReference type="GO" id="GO:0006089">
    <property type="term" value="P:lactate metabolic process"/>
    <property type="evidence" value="ECO:0007669"/>
    <property type="project" value="TreeGrafter"/>
</dbReference>
<dbReference type="CDD" id="cd05291">
    <property type="entry name" value="HicDH_like"/>
    <property type="match status" value="1"/>
</dbReference>
<dbReference type="FunFam" id="3.40.50.720:FF:000018">
    <property type="entry name" value="Malate dehydrogenase"/>
    <property type="match status" value="1"/>
</dbReference>
<dbReference type="Gene3D" id="3.90.110.10">
    <property type="entry name" value="Lactate dehydrogenase/glycoside hydrolase, family 4, C-terminal"/>
    <property type="match status" value="1"/>
</dbReference>
<dbReference type="Gene3D" id="3.40.50.720">
    <property type="entry name" value="NAD(P)-binding Rossmann-like Domain"/>
    <property type="match status" value="1"/>
</dbReference>
<dbReference type="HAMAP" id="MF_00488">
    <property type="entry name" value="Lactate_dehydrog"/>
    <property type="match status" value="1"/>
</dbReference>
<dbReference type="InterPro" id="IPR001557">
    <property type="entry name" value="L-lactate/malate_DH"/>
</dbReference>
<dbReference type="InterPro" id="IPR011304">
    <property type="entry name" value="L-lactate_DH"/>
</dbReference>
<dbReference type="InterPro" id="IPR018177">
    <property type="entry name" value="L-lactate_DH_AS"/>
</dbReference>
<dbReference type="InterPro" id="IPR022383">
    <property type="entry name" value="Lactate/malate_DH_C"/>
</dbReference>
<dbReference type="InterPro" id="IPR001236">
    <property type="entry name" value="Lactate/malate_DH_N"/>
</dbReference>
<dbReference type="InterPro" id="IPR015955">
    <property type="entry name" value="Lactate_DH/Glyco_Ohase_4_C"/>
</dbReference>
<dbReference type="InterPro" id="IPR036291">
    <property type="entry name" value="NAD(P)-bd_dom_sf"/>
</dbReference>
<dbReference type="NCBIfam" id="TIGR01771">
    <property type="entry name" value="L-LDH-NAD"/>
    <property type="match status" value="1"/>
</dbReference>
<dbReference type="NCBIfam" id="NF000824">
    <property type="entry name" value="PRK00066.1"/>
    <property type="match status" value="1"/>
</dbReference>
<dbReference type="NCBIfam" id="NF004863">
    <property type="entry name" value="PRK06223.1"/>
    <property type="match status" value="1"/>
</dbReference>
<dbReference type="PANTHER" id="PTHR43128">
    <property type="entry name" value="L-2-HYDROXYCARBOXYLATE DEHYDROGENASE (NAD(P)(+))"/>
    <property type="match status" value="1"/>
</dbReference>
<dbReference type="PANTHER" id="PTHR43128:SF16">
    <property type="entry name" value="L-LACTATE DEHYDROGENASE"/>
    <property type="match status" value="1"/>
</dbReference>
<dbReference type="Pfam" id="PF02866">
    <property type="entry name" value="Ldh_1_C"/>
    <property type="match status" value="1"/>
</dbReference>
<dbReference type="Pfam" id="PF00056">
    <property type="entry name" value="Ldh_1_N"/>
    <property type="match status" value="1"/>
</dbReference>
<dbReference type="PIRSF" id="PIRSF000102">
    <property type="entry name" value="Lac_mal_DH"/>
    <property type="match status" value="1"/>
</dbReference>
<dbReference type="PRINTS" id="PR00086">
    <property type="entry name" value="LLDHDRGNASE"/>
</dbReference>
<dbReference type="SUPFAM" id="SSF56327">
    <property type="entry name" value="LDH C-terminal domain-like"/>
    <property type="match status" value="1"/>
</dbReference>
<dbReference type="SUPFAM" id="SSF51735">
    <property type="entry name" value="NAD(P)-binding Rossmann-fold domains"/>
    <property type="match status" value="1"/>
</dbReference>
<dbReference type="PROSITE" id="PS00064">
    <property type="entry name" value="L_LDH"/>
    <property type="match status" value="1"/>
</dbReference>
<comment type="function">
    <text evidence="1">Catalyzes the conversion of lactate to pyruvate.</text>
</comment>
<comment type="catalytic activity">
    <reaction evidence="1">
        <text>(S)-lactate + NAD(+) = pyruvate + NADH + H(+)</text>
        <dbReference type="Rhea" id="RHEA:23444"/>
        <dbReference type="ChEBI" id="CHEBI:15361"/>
        <dbReference type="ChEBI" id="CHEBI:15378"/>
        <dbReference type="ChEBI" id="CHEBI:16651"/>
        <dbReference type="ChEBI" id="CHEBI:57540"/>
        <dbReference type="ChEBI" id="CHEBI:57945"/>
        <dbReference type="EC" id="1.1.1.27"/>
    </reaction>
</comment>
<comment type="activity regulation">
    <text evidence="1">Allosterically activated by fructose 1,6-bisphosphate (FBP).</text>
</comment>
<comment type="pathway">
    <text evidence="1">Fermentation; pyruvate fermentation to lactate; (S)-lactate from pyruvate: step 1/1.</text>
</comment>
<comment type="subunit">
    <text evidence="1">Homotetramer.</text>
</comment>
<comment type="subcellular location">
    <subcellularLocation>
        <location evidence="1">Cytoplasm</location>
    </subcellularLocation>
</comment>
<comment type="similarity">
    <text evidence="1 3">Belongs to the LDH/MDH superfamily. LDH family.</text>
</comment>
<proteinExistence type="inferred from homology"/>
<organism>
    <name type="scientific">Lactococcus lactis subsp. lactis (strain IL1403)</name>
    <name type="common">Streptococcus lactis</name>
    <dbReference type="NCBI Taxonomy" id="272623"/>
    <lineage>
        <taxon>Bacteria</taxon>
        <taxon>Bacillati</taxon>
        <taxon>Bacillota</taxon>
        <taxon>Bacilli</taxon>
        <taxon>Lactobacillales</taxon>
        <taxon>Streptococcaceae</taxon>
        <taxon>Lactococcus</taxon>
    </lineage>
</organism>
<evidence type="ECO:0000255" key="1">
    <source>
        <dbReference type="HAMAP-Rule" id="MF_00488"/>
    </source>
</evidence>
<evidence type="ECO:0000303" key="2">
    <source>
    </source>
</evidence>
<evidence type="ECO:0000305" key="3"/>